<protein>
    <recommendedName>
        <fullName evidence="1">NAD(P)H-quinone oxidoreductase subunit I, chloroplastic</fullName>
        <ecNumber evidence="1">7.1.1.-</ecNumber>
    </recommendedName>
    <alternativeName>
        <fullName evidence="1">NAD(P)H dehydrogenase subunit I</fullName>
        <shortName evidence="1">NDH subunit I</shortName>
    </alternativeName>
    <alternativeName>
        <fullName evidence="1">NADH-plastoquinone oxidoreductase subunit I</fullName>
    </alternativeName>
</protein>
<geneLocation type="chloroplast"/>
<name>NDHI_ATHGP</name>
<comment type="function">
    <text evidence="1">NDH shuttles electrons from NAD(P)H:plastoquinone, via FMN and iron-sulfur (Fe-S) centers, to quinones in the photosynthetic chain and possibly in a chloroplast respiratory chain. The immediate electron acceptor for the enzyme in this species is believed to be plastoquinone. Couples the redox reaction to proton translocation, and thus conserves the redox energy in a proton gradient.</text>
</comment>
<comment type="catalytic activity">
    <reaction evidence="1">
        <text>a plastoquinone + NADH + (n+1) H(+)(in) = a plastoquinol + NAD(+) + n H(+)(out)</text>
        <dbReference type="Rhea" id="RHEA:42608"/>
        <dbReference type="Rhea" id="RHEA-COMP:9561"/>
        <dbReference type="Rhea" id="RHEA-COMP:9562"/>
        <dbReference type="ChEBI" id="CHEBI:15378"/>
        <dbReference type="ChEBI" id="CHEBI:17757"/>
        <dbReference type="ChEBI" id="CHEBI:57540"/>
        <dbReference type="ChEBI" id="CHEBI:57945"/>
        <dbReference type="ChEBI" id="CHEBI:62192"/>
    </reaction>
</comment>
<comment type="catalytic activity">
    <reaction evidence="1">
        <text>a plastoquinone + NADPH + (n+1) H(+)(in) = a plastoquinol + NADP(+) + n H(+)(out)</text>
        <dbReference type="Rhea" id="RHEA:42612"/>
        <dbReference type="Rhea" id="RHEA-COMP:9561"/>
        <dbReference type="Rhea" id="RHEA-COMP:9562"/>
        <dbReference type="ChEBI" id="CHEBI:15378"/>
        <dbReference type="ChEBI" id="CHEBI:17757"/>
        <dbReference type="ChEBI" id="CHEBI:57783"/>
        <dbReference type="ChEBI" id="CHEBI:58349"/>
        <dbReference type="ChEBI" id="CHEBI:62192"/>
    </reaction>
</comment>
<comment type="cofactor">
    <cofactor evidence="1">
        <name>[4Fe-4S] cluster</name>
        <dbReference type="ChEBI" id="CHEBI:49883"/>
    </cofactor>
    <text evidence="1">Binds 2 [4Fe-4S] clusters per subunit.</text>
</comment>
<comment type="subunit">
    <text evidence="1">NDH is composed of at least 16 different subunits, 5 of which are encoded in the nucleus.</text>
</comment>
<comment type="subcellular location">
    <subcellularLocation>
        <location evidence="1">Plastid</location>
        <location evidence="1">Chloroplast thylakoid membrane</location>
        <topology evidence="1">Peripheral membrane protein</topology>
    </subcellularLocation>
</comment>
<comment type="similarity">
    <text evidence="1">Belongs to the complex I 23 kDa subunit family.</text>
</comment>
<gene>
    <name evidence="1" type="primary">ndhI</name>
</gene>
<dbReference type="EC" id="7.1.1.-" evidence="1"/>
<dbReference type="EMBL" id="AF383757">
    <property type="protein sequence ID" value="AAN61699.1"/>
    <property type="molecule type" value="Genomic_DNA"/>
</dbReference>
<dbReference type="SMR" id="Q8HVV5"/>
<dbReference type="GO" id="GO:0009535">
    <property type="term" value="C:chloroplast thylakoid membrane"/>
    <property type="evidence" value="ECO:0007669"/>
    <property type="project" value="UniProtKB-SubCell"/>
</dbReference>
<dbReference type="GO" id="GO:0051539">
    <property type="term" value="F:4 iron, 4 sulfur cluster binding"/>
    <property type="evidence" value="ECO:0007669"/>
    <property type="project" value="UniProtKB-KW"/>
</dbReference>
<dbReference type="GO" id="GO:0005506">
    <property type="term" value="F:iron ion binding"/>
    <property type="evidence" value="ECO:0007669"/>
    <property type="project" value="UniProtKB-UniRule"/>
</dbReference>
<dbReference type="GO" id="GO:0008137">
    <property type="term" value="F:NADH dehydrogenase (ubiquinone) activity"/>
    <property type="evidence" value="ECO:0007669"/>
    <property type="project" value="InterPro"/>
</dbReference>
<dbReference type="GO" id="GO:0048038">
    <property type="term" value="F:quinone binding"/>
    <property type="evidence" value="ECO:0007669"/>
    <property type="project" value="UniProtKB-KW"/>
</dbReference>
<dbReference type="GO" id="GO:0019684">
    <property type="term" value="P:photosynthesis, light reaction"/>
    <property type="evidence" value="ECO:0007669"/>
    <property type="project" value="UniProtKB-UniRule"/>
</dbReference>
<dbReference type="FunFam" id="3.30.70.3270:FF:000006">
    <property type="entry name" value="NAD(P)H-quinone oxidoreductase subunit I, chloroplastic"/>
    <property type="match status" value="1"/>
</dbReference>
<dbReference type="Gene3D" id="3.30.70.3270">
    <property type="match status" value="1"/>
</dbReference>
<dbReference type="HAMAP" id="MF_01351">
    <property type="entry name" value="NDH1_NuoI"/>
    <property type="match status" value="1"/>
</dbReference>
<dbReference type="InterPro" id="IPR017896">
    <property type="entry name" value="4Fe4S_Fe-S-bd"/>
</dbReference>
<dbReference type="InterPro" id="IPR017900">
    <property type="entry name" value="4Fe4S_Fe_S_CS"/>
</dbReference>
<dbReference type="InterPro" id="IPR010226">
    <property type="entry name" value="NADH_quinone_OxRdtase_chainI"/>
</dbReference>
<dbReference type="InterPro" id="IPR004497">
    <property type="entry name" value="NDHI"/>
</dbReference>
<dbReference type="NCBIfam" id="TIGR00403">
    <property type="entry name" value="ndhI"/>
    <property type="match status" value="1"/>
</dbReference>
<dbReference type="NCBIfam" id="TIGR01971">
    <property type="entry name" value="NuoI"/>
    <property type="match status" value="1"/>
</dbReference>
<dbReference type="NCBIfam" id="NF004537">
    <property type="entry name" value="PRK05888.1-3"/>
    <property type="match status" value="1"/>
</dbReference>
<dbReference type="PANTHER" id="PTHR47275">
    <property type="entry name" value="NAD(P)H-QUINONE OXIDOREDUCTASE SUBUNIT I, CHLOROPLASTIC"/>
    <property type="match status" value="1"/>
</dbReference>
<dbReference type="PANTHER" id="PTHR47275:SF1">
    <property type="entry name" value="NAD(P)H-QUINONE OXIDOREDUCTASE SUBUNIT I, CHLOROPLASTIC"/>
    <property type="match status" value="1"/>
</dbReference>
<dbReference type="Pfam" id="PF00037">
    <property type="entry name" value="Fer4"/>
    <property type="match status" value="2"/>
</dbReference>
<dbReference type="SUPFAM" id="SSF54862">
    <property type="entry name" value="4Fe-4S ferredoxins"/>
    <property type="match status" value="1"/>
</dbReference>
<dbReference type="PROSITE" id="PS00198">
    <property type="entry name" value="4FE4S_FER_1"/>
    <property type="match status" value="2"/>
</dbReference>
<dbReference type="PROSITE" id="PS51379">
    <property type="entry name" value="4FE4S_FER_2"/>
    <property type="match status" value="2"/>
</dbReference>
<evidence type="ECO:0000255" key="1">
    <source>
        <dbReference type="HAMAP-Rule" id="MF_01351"/>
    </source>
</evidence>
<proteinExistence type="inferred from homology"/>
<sequence>MFPMVTEFMNYGQQTVRAARYIGQGFMITLSHANRLPVTIQYPYEKLITSERFRGRIHFEFDKCIACEVCVRVCPIDLPVVDWKLETDIRKKRLLNYSIDFGICIFCGNCVEYCPTNCLSMTEEYELSTYDRHELNYNQIALGRLPMSVIDDYTIRTILNLPEIKT</sequence>
<feature type="chain" id="PRO_0000250758" description="NAD(P)H-quinone oxidoreductase subunit I, chloroplastic">
    <location>
        <begin position="1"/>
        <end position="166"/>
    </location>
</feature>
<feature type="domain" description="4Fe-4S ferredoxin-type 1" evidence="1">
    <location>
        <begin position="55"/>
        <end position="84"/>
    </location>
</feature>
<feature type="domain" description="4Fe-4S ferredoxin-type 2" evidence="1">
    <location>
        <begin position="95"/>
        <end position="124"/>
    </location>
</feature>
<feature type="binding site" evidence="1">
    <location>
        <position position="64"/>
    </location>
    <ligand>
        <name>[4Fe-4S] cluster</name>
        <dbReference type="ChEBI" id="CHEBI:49883"/>
        <label>1</label>
    </ligand>
</feature>
<feature type="binding site" evidence="1">
    <location>
        <position position="67"/>
    </location>
    <ligand>
        <name>[4Fe-4S] cluster</name>
        <dbReference type="ChEBI" id="CHEBI:49883"/>
        <label>1</label>
    </ligand>
</feature>
<feature type="binding site" evidence="1">
    <location>
        <position position="70"/>
    </location>
    <ligand>
        <name>[4Fe-4S] cluster</name>
        <dbReference type="ChEBI" id="CHEBI:49883"/>
        <label>1</label>
    </ligand>
</feature>
<feature type="binding site" evidence="1">
    <location>
        <position position="74"/>
    </location>
    <ligand>
        <name>[4Fe-4S] cluster</name>
        <dbReference type="ChEBI" id="CHEBI:49883"/>
        <label>2</label>
    </ligand>
</feature>
<feature type="binding site" evidence="1">
    <location>
        <position position="104"/>
    </location>
    <ligand>
        <name>[4Fe-4S] cluster</name>
        <dbReference type="ChEBI" id="CHEBI:49883"/>
        <label>2</label>
    </ligand>
</feature>
<feature type="binding site" evidence="1">
    <location>
        <position position="107"/>
    </location>
    <ligand>
        <name>[4Fe-4S] cluster</name>
        <dbReference type="ChEBI" id="CHEBI:49883"/>
        <label>2</label>
    </ligand>
</feature>
<feature type="binding site" evidence="1">
    <location>
        <position position="110"/>
    </location>
    <ligand>
        <name>[4Fe-4S] cluster</name>
        <dbReference type="ChEBI" id="CHEBI:49883"/>
        <label>2</label>
    </ligand>
</feature>
<feature type="binding site" evidence="1">
    <location>
        <position position="114"/>
    </location>
    <ligand>
        <name>[4Fe-4S] cluster</name>
        <dbReference type="ChEBI" id="CHEBI:49883"/>
        <label>1</label>
    </ligand>
</feature>
<keyword id="KW-0004">4Fe-4S</keyword>
<keyword id="KW-0150">Chloroplast</keyword>
<keyword id="KW-0408">Iron</keyword>
<keyword id="KW-0411">Iron-sulfur</keyword>
<keyword id="KW-0472">Membrane</keyword>
<keyword id="KW-0479">Metal-binding</keyword>
<keyword id="KW-0520">NAD</keyword>
<keyword id="KW-0521">NADP</keyword>
<keyword id="KW-0934">Plastid</keyword>
<keyword id="KW-0618">Plastoquinone</keyword>
<keyword id="KW-0874">Quinone</keyword>
<keyword id="KW-0677">Repeat</keyword>
<keyword id="KW-0793">Thylakoid</keyword>
<keyword id="KW-1278">Translocase</keyword>
<accession>Q8HVV5</accession>
<reference key="1">
    <citation type="submission" date="2003-01" db="EMBL/GenBank/DDBJ databases">
        <title>Chloroplast DNA phylogeny of tribe Heliantheae (Asteraceae).</title>
        <authorList>
            <person name="Panero J.L."/>
            <person name="Baldwin B.G."/>
            <person name="Schilling E.E."/>
            <person name="Clevinger J.A."/>
        </authorList>
    </citation>
    <scope>NUCLEOTIDE SEQUENCE [GENOMIC DNA]</scope>
</reference>
<organism>
    <name type="scientific">Athroisma gracile subsp. psyllioides</name>
    <dbReference type="NCBI Taxonomy" id="183107"/>
    <lineage>
        <taxon>Eukaryota</taxon>
        <taxon>Viridiplantae</taxon>
        <taxon>Streptophyta</taxon>
        <taxon>Embryophyta</taxon>
        <taxon>Tracheophyta</taxon>
        <taxon>Spermatophyta</taxon>
        <taxon>Magnoliopsida</taxon>
        <taxon>eudicotyledons</taxon>
        <taxon>Gunneridae</taxon>
        <taxon>Pentapetalae</taxon>
        <taxon>asterids</taxon>
        <taxon>campanulids</taxon>
        <taxon>Asterales</taxon>
        <taxon>Asteraceae</taxon>
        <taxon>Asteroideae</taxon>
        <taxon>Athroismeae</taxon>
        <taxon>Athroisminae</taxon>
        <taxon>Athroisma</taxon>
    </lineage>
</organism>